<dbReference type="EC" id="6.1.1.17" evidence="1"/>
<dbReference type="EMBL" id="CP000474">
    <property type="protein sequence ID" value="ABM07629.1"/>
    <property type="molecule type" value="Genomic_DNA"/>
</dbReference>
<dbReference type="RefSeq" id="WP_011775160.1">
    <property type="nucleotide sequence ID" value="NC_008711.1"/>
</dbReference>
<dbReference type="SMR" id="A1R7K6"/>
<dbReference type="STRING" id="290340.AAur_2494"/>
<dbReference type="KEGG" id="aau:AAur_2494"/>
<dbReference type="eggNOG" id="COG0008">
    <property type="taxonomic scope" value="Bacteria"/>
</dbReference>
<dbReference type="HOGENOM" id="CLU_015768_6_1_11"/>
<dbReference type="OrthoDB" id="9807503at2"/>
<dbReference type="Proteomes" id="UP000000637">
    <property type="component" value="Chromosome"/>
</dbReference>
<dbReference type="GO" id="GO:0005829">
    <property type="term" value="C:cytosol"/>
    <property type="evidence" value="ECO:0007669"/>
    <property type="project" value="TreeGrafter"/>
</dbReference>
<dbReference type="GO" id="GO:0005524">
    <property type="term" value="F:ATP binding"/>
    <property type="evidence" value="ECO:0007669"/>
    <property type="project" value="UniProtKB-UniRule"/>
</dbReference>
<dbReference type="GO" id="GO:0004818">
    <property type="term" value="F:glutamate-tRNA ligase activity"/>
    <property type="evidence" value="ECO:0007669"/>
    <property type="project" value="UniProtKB-UniRule"/>
</dbReference>
<dbReference type="GO" id="GO:0000049">
    <property type="term" value="F:tRNA binding"/>
    <property type="evidence" value="ECO:0007669"/>
    <property type="project" value="InterPro"/>
</dbReference>
<dbReference type="GO" id="GO:0008270">
    <property type="term" value="F:zinc ion binding"/>
    <property type="evidence" value="ECO:0007669"/>
    <property type="project" value="InterPro"/>
</dbReference>
<dbReference type="GO" id="GO:0006424">
    <property type="term" value="P:glutamyl-tRNA aminoacylation"/>
    <property type="evidence" value="ECO:0007669"/>
    <property type="project" value="UniProtKB-UniRule"/>
</dbReference>
<dbReference type="CDD" id="cd00808">
    <property type="entry name" value="GluRS_core"/>
    <property type="match status" value="1"/>
</dbReference>
<dbReference type="FunFam" id="3.40.50.620:FF:000149">
    <property type="entry name" value="Glutamate--tRNA ligase"/>
    <property type="match status" value="1"/>
</dbReference>
<dbReference type="Gene3D" id="1.10.10.350">
    <property type="match status" value="1"/>
</dbReference>
<dbReference type="Gene3D" id="1.10.8.70">
    <property type="entry name" value="Glutamate-tRNA synthetase, class I, anticodon-binding domain 1"/>
    <property type="match status" value="1"/>
</dbReference>
<dbReference type="Gene3D" id="1.10.1160.10">
    <property type="entry name" value="Glutamyl-trna Synthetase, Domain 2"/>
    <property type="match status" value="1"/>
</dbReference>
<dbReference type="Gene3D" id="3.90.800.10">
    <property type="entry name" value="Glutamyl-tRNA Synthetase, Domain 3"/>
    <property type="match status" value="1"/>
</dbReference>
<dbReference type="Gene3D" id="3.40.50.620">
    <property type="entry name" value="HUPs"/>
    <property type="match status" value="1"/>
</dbReference>
<dbReference type="HAMAP" id="MF_00022">
    <property type="entry name" value="Glu_tRNA_synth_type1"/>
    <property type="match status" value="1"/>
</dbReference>
<dbReference type="InterPro" id="IPR045462">
    <property type="entry name" value="aa-tRNA-synth_I_cd-bd"/>
</dbReference>
<dbReference type="InterPro" id="IPR020751">
    <property type="entry name" value="aa-tRNA-synth_I_codon-bd_sub2"/>
</dbReference>
<dbReference type="InterPro" id="IPR008925">
    <property type="entry name" value="aa_tRNA-synth_I_cd-bd_sf"/>
</dbReference>
<dbReference type="InterPro" id="IPR004527">
    <property type="entry name" value="Glu-tRNA-ligase_bac/mito"/>
</dbReference>
<dbReference type="InterPro" id="IPR020752">
    <property type="entry name" value="Glu-tRNA-synth_I_codon-bd_sub1"/>
</dbReference>
<dbReference type="InterPro" id="IPR000924">
    <property type="entry name" value="Glu/Gln-tRNA-synth"/>
</dbReference>
<dbReference type="InterPro" id="IPR020058">
    <property type="entry name" value="Glu/Gln-tRNA-synth_Ib_cat-dom"/>
</dbReference>
<dbReference type="InterPro" id="IPR020061">
    <property type="entry name" value="Glu_tRNA_lig_a-bdl"/>
</dbReference>
<dbReference type="InterPro" id="IPR049940">
    <property type="entry name" value="GluQ/Sye"/>
</dbReference>
<dbReference type="InterPro" id="IPR033910">
    <property type="entry name" value="GluRS_core"/>
</dbReference>
<dbReference type="InterPro" id="IPR014729">
    <property type="entry name" value="Rossmann-like_a/b/a_fold"/>
</dbReference>
<dbReference type="NCBIfam" id="TIGR00464">
    <property type="entry name" value="gltX_bact"/>
    <property type="match status" value="1"/>
</dbReference>
<dbReference type="PANTHER" id="PTHR43311">
    <property type="entry name" value="GLUTAMATE--TRNA LIGASE"/>
    <property type="match status" value="1"/>
</dbReference>
<dbReference type="PANTHER" id="PTHR43311:SF2">
    <property type="entry name" value="GLUTAMATE--TRNA LIGASE, MITOCHONDRIAL-RELATED"/>
    <property type="match status" value="1"/>
</dbReference>
<dbReference type="Pfam" id="PF19269">
    <property type="entry name" value="Anticodon_2"/>
    <property type="match status" value="1"/>
</dbReference>
<dbReference type="Pfam" id="PF00749">
    <property type="entry name" value="tRNA-synt_1c"/>
    <property type="match status" value="1"/>
</dbReference>
<dbReference type="PRINTS" id="PR00987">
    <property type="entry name" value="TRNASYNTHGLU"/>
</dbReference>
<dbReference type="SUPFAM" id="SSF48163">
    <property type="entry name" value="An anticodon-binding domain of class I aminoacyl-tRNA synthetases"/>
    <property type="match status" value="1"/>
</dbReference>
<dbReference type="SUPFAM" id="SSF52374">
    <property type="entry name" value="Nucleotidylyl transferase"/>
    <property type="match status" value="1"/>
</dbReference>
<evidence type="ECO:0000255" key="1">
    <source>
        <dbReference type="HAMAP-Rule" id="MF_00022"/>
    </source>
</evidence>
<name>SYE_PAEAT</name>
<accession>A1R7K6</accession>
<feature type="chain" id="PRO_0000330952" description="Glutamate--tRNA ligase">
    <location>
        <begin position="1"/>
        <end position="506"/>
    </location>
</feature>
<feature type="short sequence motif" description="'HIGH' region" evidence="1">
    <location>
        <begin position="29"/>
        <end position="39"/>
    </location>
</feature>
<feature type="short sequence motif" description="'KMSKS' region" evidence="1">
    <location>
        <begin position="273"/>
        <end position="277"/>
    </location>
</feature>
<feature type="binding site" evidence="1">
    <location>
        <position position="276"/>
    </location>
    <ligand>
        <name>ATP</name>
        <dbReference type="ChEBI" id="CHEBI:30616"/>
    </ligand>
</feature>
<proteinExistence type="inferred from homology"/>
<reference key="1">
    <citation type="journal article" date="2006" name="PLoS Genet.">
        <title>Secrets of soil survival revealed by the genome sequence of Arthrobacter aurescens TC1.</title>
        <authorList>
            <person name="Mongodin E.F."/>
            <person name="Shapir N."/>
            <person name="Daugherty S.C."/>
            <person name="DeBoy R.T."/>
            <person name="Emerson J.B."/>
            <person name="Shvartzbeyn A."/>
            <person name="Radune D."/>
            <person name="Vamathevan J."/>
            <person name="Riggs F."/>
            <person name="Grinberg V."/>
            <person name="Khouri H.M."/>
            <person name="Wackett L.P."/>
            <person name="Nelson K.E."/>
            <person name="Sadowsky M.J."/>
        </authorList>
    </citation>
    <scope>NUCLEOTIDE SEQUENCE [LARGE SCALE GENOMIC DNA]</scope>
    <source>
        <strain>TC1</strain>
    </source>
</reference>
<protein>
    <recommendedName>
        <fullName evidence="1">Glutamate--tRNA ligase</fullName>
        <ecNumber evidence="1">6.1.1.17</ecNumber>
    </recommendedName>
    <alternativeName>
        <fullName evidence="1">Glutamyl-tRNA synthetase</fullName>
        <shortName evidence="1">GluRS</shortName>
    </alternativeName>
</protein>
<keyword id="KW-0030">Aminoacyl-tRNA synthetase</keyword>
<keyword id="KW-0067">ATP-binding</keyword>
<keyword id="KW-0963">Cytoplasm</keyword>
<keyword id="KW-0436">Ligase</keyword>
<keyword id="KW-0547">Nucleotide-binding</keyword>
<keyword id="KW-0648">Protein biosynthesis</keyword>
<gene>
    <name evidence="1" type="primary">gltX</name>
    <name type="ordered locus">AAur_2494</name>
</gene>
<comment type="function">
    <text evidence="1">Catalyzes the attachment of glutamate to tRNA(Glu) in a two-step reaction: glutamate is first activated by ATP to form Glu-AMP and then transferred to the acceptor end of tRNA(Glu).</text>
</comment>
<comment type="catalytic activity">
    <reaction evidence="1">
        <text>tRNA(Glu) + L-glutamate + ATP = L-glutamyl-tRNA(Glu) + AMP + diphosphate</text>
        <dbReference type="Rhea" id="RHEA:23540"/>
        <dbReference type="Rhea" id="RHEA-COMP:9663"/>
        <dbReference type="Rhea" id="RHEA-COMP:9680"/>
        <dbReference type="ChEBI" id="CHEBI:29985"/>
        <dbReference type="ChEBI" id="CHEBI:30616"/>
        <dbReference type="ChEBI" id="CHEBI:33019"/>
        <dbReference type="ChEBI" id="CHEBI:78442"/>
        <dbReference type="ChEBI" id="CHEBI:78520"/>
        <dbReference type="ChEBI" id="CHEBI:456215"/>
        <dbReference type="EC" id="6.1.1.17"/>
    </reaction>
</comment>
<comment type="subunit">
    <text evidence="1">Monomer.</text>
</comment>
<comment type="subcellular location">
    <subcellularLocation>
        <location evidence="1">Cytoplasm</location>
    </subcellularLocation>
</comment>
<comment type="similarity">
    <text evidence="1">Belongs to the class-I aminoacyl-tRNA synthetase family. Glutamate--tRNA ligase type 1 subfamily.</text>
</comment>
<organism>
    <name type="scientific">Paenarthrobacter aurescens (strain TC1)</name>
    <dbReference type="NCBI Taxonomy" id="290340"/>
    <lineage>
        <taxon>Bacteria</taxon>
        <taxon>Bacillati</taxon>
        <taxon>Actinomycetota</taxon>
        <taxon>Actinomycetes</taxon>
        <taxon>Micrococcales</taxon>
        <taxon>Micrococcaceae</taxon>
        <taxon>Paenarthrobacter</taxon>
    </lineage>
</organism>
<sequence>MTTASASNAASSAIPAVNAETPVRVRFCPSPTGTPHVGLIRTALFNWAYARHTGGKLIFRIEDTDSARDSEESYHQLLDALKWLGINWDEGVEVGGPHEPYRQSQRGDIYQDVIAKLKAGGHVYESYSTPDEIEARHKAAGRDPKLGYDGFDRHLTDEQLAQFKAEGREAVLRLRMPDEDLTFNDLVRGEITFKAGSVPDFAVVRANGAPLYTLVNPVDDALMGITHVLRGEDLLSSTPRQIALYRALYAIGVAEYMPEFGHLPYVMGQGNKKLSKRDPESSLFLHRERGFIPEGLLNYLSLLGWSLSADEDIFTVEQLVANFDIHDVLGNPARFDIKKAEAINGTHVRMLAAEDFKERLVPYLRAAGFVGEILTPRQEEILAEAAPLVQERITLLGEAPEMLAFLFKADDAIDVADDARKGLPQNLEEVLDAALAALEPIGEWTAENIQTALKQALVEDLGIKPRAAFGPVRTAISGRRISPPLFESMVILGKDSSLARVRAFRG</sequence>